<sequence>MREAPHVLGIVLAGGEGKRLYPLTADRAKPAVPFGGGYRLIDFVLSNLVNARFLRICVLTQYKSHSLDRHISQNWRLSGLAGEYITPVPAQQRLGPRWYTGSADAIYQSMNLIYDEDPDYIVIFGADHVYRMDPEQMVQQHIESGAGATVAGIRVPRSEASAFGCIDADDSGRIRGWVEKPADPPGTPDDPEMTFASMGNYIFTTKVLIDAIRADAEDDDSDHDMGGDIIPRLVADGMASVYDFNNNEVPGATERDHGYWRDVGTLDAFYDAHMDLVSVHPIFNLYNKRWPIRGGAENLAPAKFVNGGSAQESVVGAGSIISAASVRNSVLSSNVAIDDGAIVEGSVIMPGVRIGRGAVVRHAILDKNVVVGPGEMVGVDLDKDRERFTVSAGGVVAVGKGVWI</sequence>
<reference key="1">
    <citation type="submission" date="2007-04" db="EMBL/GenBank/DDBJ databases">
        <title>Complete sequence of chromosome of Mycobacterium gilvum PYR-GCK.</title>
        <authorList>
            <consortium name="US DOE Joint Genome Institute"/>
            <person name="Copeland A."/>
            <person name="Lucas S."/>
            <person name="Lapidus A."/>
            <person name="Barry K."/>
            <person name="Detter J.C."/>
            <person name="Glavina del Rio T."/>
            <person name="Hammon N."/>
            <person name="Israni S."/>
            <person name="Dalin E."/>
            <person name="Tice H."/>
            <person name="Pitluck S."/>
            <person name="Chain P."/>
            <person name="Malfatti S."/>
            <person name="Shin M."/>
            <person name="Vergez L."/>
            <person name="Schmutz J."/>
            <person name="Larimer F."/>
            <person name="Land M."/>
            <person name="Hauser L."/>
            <person name="Kyrpides N."/>
            <person name="Mikhailova N."/>
            <person name="Miller C."/>
            <person name="Richardson P."/>
        </authorList>
    </citation>
    <scope>NUCLEOTIDE SEQUENCE [LARGE SCALE GENOMIC DNA]</scope>
    <source>
        <strain>PYR-GCK</strain>
    </source>
</reference>
<protein>
    <recommendedName>
        <fullName evidence="1">Glucose-1-phosphate adenylyltransferase</fullName>
        <ecNumber evidence="1">2.7.7.27</ecNumber>
    </recommendedName>
    <alternativeName>
        <fullName evidence="1">ADP-glucose pyrophosphorylase</fullName>
        <shortName evidence="1">ADPGlc PPase</shortName>
    </alternativeName>
    <alternativeName>
        <fullName evidence="1">ADP-glucose synthase</fullName>
    </alternativeName>
</protein>
<feature type="chain" id="PRO_1000082598" description="Glucose-1-phosphate adenylyltransferase">
    <location>
        <begin position="1"/>
        <end position="404"/>
    </location>
</feature>
<feature type="binding site" evidence="1">
    <location>
        <position position="99"/>
    </location>
    <ligand>
        <name>alpha-D-glucose 1-phosphate</name>
        <dbReference type="ChEBI" id="CHEBI:58601"/>
    </ligand>
</feature>
<feature type="binding site" evidence="1">
    <location>
        <position position="164"/>
    </location>
    <ligand>
        <name>alpha-D-glucose 1-phosphate</name>
        <dbReference type="ChEBI" id="CHEBI:58601"/>
    </ligand>
</feature>
<feature type="binding site" evidence="1">
    <location>
        <begin position="179"/>
        <end position="180"/>
    </location>
    <ligand>
        <name>alpha-D-glucose 1-phosphate</name>
        <dbReference type="ChEBI" id="CHEBI:58601"/>
    </ligand>
</feature>
<feature type="binding site" evidence="1">
    <location>
        <position position="197"/>
    </location>
    <ligand>
        <name>alpha-D-glucose 1-phosphate</name>
        <dbReference type="ChEBI" id="CHEBI:58601"/>
    </ligand>
</feature>
<dbReference type="EC" id="2.7.7.27" evidence="1"/>
<dbReference type="EMBL" id="CP000656">
    <property type="protein sequence ID" value="ABP44671.1"/>
    <property type="molecule type" value="Genomic_DNA"/>
</dbReference>
<dbReference type="SMR" id="A4T8X4"/>
<dbReference type="STRING" id="350054.Mflv_2193"/>
<dbReference type="KEGG" id="mgi:Mflv_2193"/>
<dbReference type="eggNOG" id="COG0448">
    <property type="taxonomic scope" value="Bacteria"/>
</dbReference>
<dbReference type="HOGENOM" id="CLU_029499_14_1_11"/>
<dbReference type="OrthoDB" id="9801810at2"/>
<dbReference type="UniPathway" id="UPA00164"/>
<dbReference type="GO" id="GO:0005524">
    <property type="term" value="F:ATP binding"/>
    <property type="evidence" value="ECO:0007669"/>
    <property type="project" value="UniProtKB-KW"/>
</dbReference>
<dbReference type="GO" id="GO:0008878">
    <property type="term" value="F:glucose-1-phosphate adenylyltransferase activity"/>
    <property type="evidence" value="ECO:0007669"/>
    <property type="project" value="UniProtKB-UniRule"/>
</dbReference>
<dbReference type="GO" id="GO:0005978">
    <property type="term" value="P:glycogen biosynthetic process"/>
    <property type="evidence" value="ECO:0007669"/>
    <property type="project" value="UniProtKB-UniRule"/>
</dbReference>
<dbReference type="CDD" id="cd02508">
    <property type="entry name" value="ADP_Glucose_PP"/>
    <property type="match status" value="1"/>
</dbReference>
<dbReference type="CDD" id="cd04651">
    <property type="entry name" value="LbH_G1P_AT_C"/>
    <property type="match status" value="1"/>
</dbReference>
<dbReference type="FunFam" id="3.90.550.10:FF:000014">
    <property type="entry name" value="Glucose-1-phosphate adenylyltransferase"/>
    <property type="match status" value="1"/>
</dbReference>
<dbReference type="Gene3D" id="2.160.10.10">
    <property type="entry name" value="Hexapeptide repeat proteins"/>
    <property type="match status" value="1"/>
</dbReference>
<dbReference type="Gene3D" id="3.90.550.10">
    <property type="entry name" value="Spore Coat Polysaccharide Biosynthesis Protein SpsA, Chain A"/>
    <property type="match status" value="1"/>
</dbReference>
<dbReference type="HAMAP" id="MF_00624">
    <property type="entry name" value="GlgC"/>
    <property type="match status" value="1"/>
</dbReference>
<dbReference type="InterPro" id="IPR011831">
    <property type="entry name" value="ADP-Glc_PPase"/>
</dbReference>
<dbReference type="InterPro" id="IPR005836">
    <property type="entry name" value="ADP_Glu_pyroP_CS"/>
</dbReference>
<dbReference type="InterPro" id="IPR023049">
    <property type="entry name" value="GlgC_bac"/>
</dbReference>
<dbReference type="InterPro" id="IPR056818">
    <property type="entry name" value="GlmU/GlgC-like_hexapep"/>
</dbReference>
<dbReference type="InterPro" id="IPR005835">
    <property type="entry name" value="NTP_transferase_dom"/>
</dbReference>
<dbReference type="InterPro" id="IPR029044">
    <property type="entry name" value="Nucleotide-diphossugar_trans"/>
</dbReference>
<dbReference type="InterPro" id="IPR011004">
    <property type="entry name" value="Trimer_LpxA-like_sf"/>
</dbReference>
<dbReference type="NCBIfam" id="TIGR02091">
    <property type="entry name" value="glgC"/>
    <property type="match status" value="1"/>
</dbReference>
<dbReference type="NCBIfam" id="NF001947">
    <property type="entry name" value="PRK00725.1"/>
    <property type="match status" value="1"/>
</dbReference>
<dbReference type="NCBIfam" id="NF002023">
    <property type="entry name" value="PRK00844.1"/>
    <property type="match status" value="1"/>
</dbReference>
<dbReference type="PANTHER" id="PTHR43523:SF2">
    <property type="entry name" value="GLUCOSE-1-PHOSPHATE ADENYLYLTRANSFERASE"/>
    <property type="match status" value="1"/>
</dbReference>
<dbReference type="PANTHER" id="PTHR43523">
    <property type="entry name" value="GLUCOSE-1-PHOSPHATE ADENYLYLTRANSFERASE-RELATED"/>
    <property type="match status" value="1"/>
</dbReference>
<dbReference type="Pfam" id="PF24894">
    <property type="entry name" value="Hexapep_GlmU"/>
    <property type="match status" value="1"/>
</dbReference>
<dbReference type="Pfam" id="PF00483">
    <property type="entry name" value="NTP_transferase"/>
    <property type="match status" value="1"/>
</dbReference>
<dbReference type="SUPFAM" id="SSF53448">
    <property type="entry name" value="Nucleotide-diphospho-sugar transferases"/>
    <property type="match status" value="1"/>
</dbReference>
<dbReference type="SUPFAM" id="SSF51161">
    <property type="entry name" value="Trimeric LpxA-like enzymes"/>
    <property type="match status" value="1"/>
</dbReference>
<dbReference type="PROSITE" id="PS00808">
    <property type="entry name" value="ADP_GLC_PYROPHOSPH_1"/>
    <property type="match status" value="1"/>
</dbReference>
<dbReference type="PROSITE" id="PS00809">
    <property type="entry name" value="ADP_GLC_PYROPHOSPH_2"/>
    <property type="match status" value="1"/>
</dbReference>
<dbReference type="PROSITE" id="PS00810">
    <property type="entry name" value="ADP_GLC_PYROPHOSPH_3"/>
    <property type="match status" value="1"/>
</dbReference>
<gene>
    <name evidence="1" type="primary">glgC</name>
    <name type="ordered locus">Mflv_2193</name>
</gene>
<organism>
    <name type="scientific">Mycolicibacterium gilvum (strain PYR-GCK)</name>
    <name type="common">Mycobacterium gilvum (strain PYR-GCK)</name>
    <dbReference type="NCBI Taxonomy" id="350054"/>
    <lineage>
        <taxon>Bacteria</taxon>
        <taxon>Bacillati</taxon>
        <taxon>Actinomycetota</taxon>
        <taxon>Actinomycetes</taxon>
        <taxon>Mycobacteriales</taxon>
        <taxon>Mycobacteriaceae</taxon>
        <taxon>Mycolicibacterium</taxon>
    </lineage>
</organism>
<accession>A4T8X4</accession>
<name>GLGC_MYCGI</name>
<proteinExistence type="inferred from homology"/>
<comment type="function">
    <text evidence="1">Involved in the biosynthesis of ADP-glucose, a building block, required in the biosynthesis of maltose-1-phosphate (M1P) and in the elongation reactions to produce linear alpha-1,4-glucans. Catalyzes the reaction between ATP and alpha-D-glucose 1-phosphate (G1P) to produce pyrophosphate and ADP-Glc.</text>
</comment>
<comment type="catalytic activity">
    <reaction evidence="1">
        <text>alpha-D-glucose 1-phosphate + ATP + H(+) = ADP-alpha-D-glucose + diphosphate</text>
        <dbReference type="Rhea" id="RHEA:12120"/>
        <dbReference type="ChEBI" id="CHEBI:15378"/>
        <dbReference type="ChEBI" id="CHEBI:30616"/>
        <dbReference type="ChEBI" id="CHEBI:33019"/>
        <dbReference type="ChEBI" id="CHEBI:57498"/>
        <dbReference type="ChEBI" id="CHEBI:58601"/>
        <dbReference type="EC" id="2.7.7.27"/>
    </reaction>
</comment>
<comment type="pathway">
    <text evidence="1">Glycan biosynthesis; glycogen biosynthesis.</text>
</comment>
<comment type="similarity">
    <text evidence="1">Belongs to the bacterial/plant glucose-1-phosphate adenylyltransferase family.</text>
</comment>
<keyword id="KW-0067">ATP-binding</keyword>
<keyword id="KW-0119">Carbohydrate metabolism</keyword>
<keyword id="KW-0320">Glycogen biosynthesis</keyword>
<keyword id="KW-0321">Glycogen metabolism</keyword>
<keyword id="KW-0547">Nucleotide-binding</keyword>
<keyword id="KW-0548">Nucleotidyltransferase</keyword>
<keyword id="KW-0808">Transferase</keyword>
<evidence type="ECO:0000255" key="1">
    <source>
        <dbReference type="HAMAP-Rule" id="MF_00624"/>
    </source>
</evidence>